<reference key="1">
    <citation type="journal article" date="1995" name="Appl. Environ. Microbiol.">
        <title>xylA cloning and sequencing and biochemical characterization of xylose isomerase from Thermotoga neapolitana.</title>
        <authorList>
            <person name="Vieille C."/>
            <person name="Hess J.M.J."/>
            <person name="Kelly R.M."/>
            <person name="Zeikus J.G.J."/>
        </authorList>
    </citation>
    <scope>NUCLEOTIDE SEQUENCE [GENOMIC DNA]</scope>
    <source>
        <strain>DSM 5068 / LA4</strain>
    </source>
</reference>
<reference key="2">
    <citation type="submission" date="1997-11" db="PDB data bank">
        <authorList>
            <person name="Gallay O."/>
            <person name="Chopra R."/>
            <person name="Conti E."/>
            <person name="Brick P."/>
            <person name="Jackson R."/>
            <person name="Hartley B."/>
            <person name="Vieille C."/>
            <person name="Zeikus J.G."/>
            <person name="Blow D."/>
        </authorList>
    </citation>
    <scope>X-RAY CRYSTALLOGRAPHY (2.7 ANGSTROMS)</scope>
    <source>
        <strain>DSM 5068 / LA4</strain>
    </source>
</reference>
<evidence type="ECO:0000250" key="1"/>
<evidence type="ECO:0000305" key="2"/>
<evidence type="ECO:0007829" key="3">
    <source>
        <dbReference type="PDB" id="1A0E"/>
    </source>
</evidence>
<name>XYLA_THENE</name>
<accession>P45687</accession>
<keyword id="KW-0002">3D-structure</keyword>
<keyword id="KW-0119">Carbohydrate metabolism</keyword>
<keyword id="KW-0170">Cobalt</keyword>
<keyword id="KW-0963">Cytoplasm</keyword>
<keyword id="KW-0413">Isomerase</keyword>
<keyword id="KW-0479">Metal-binding</keyword>
<keyword id="KW-0859">Xylose metabolism</keyword>
<comment type="catalytic activity">
    <reaction>
        <text>alpha-D-xylose = alpha-D-xylulofuranose</text>
        <dbReference type="Rhea" id="RHEA:22816"/>
        <dbReference type="ChEBI" id="CHEBI:28518"/>
        <dbReference type="ChEBI" id="CHEBI:188998"/>
        <dbReference type="EC" id="5.3.1.5"/>
    </reaction>
</comment>
<comment type="cofactor">
    <cofactor>
        <name>Co(2+)</name>
        <dbReference type="ChEBI" id="CHEBI:48828"/>
    </cofactor>
    <text>Binds 2 cobalt ions per subunit.</text>
</comment>
<comment type="biophysicochemical properties">
    <phDependence>
        <text>Optimum pH is 7.1.</text>
    </phDependence>
    <temperatureDependence>
        <text>Optimum temperature is above 95 degrees Celsius. Extremely thermostable.</text>
    </temperatureDependence>
</comment>
<comment type="subunit">
    <text>Homotetramer.</text>
</comment>
<comment type="subcellular location">
    <subcellularLocation>
        <location>Cytoplasm</location>
    </subcellularLocation>
</comment>
<comment type="similarity">
    <text evidence="2">Belongs to the xylose isomerase family.</text>
</comment>
<sequence length="444" mass="50893">MAEFFPEIPKVQFEGKESTNPLAFKFYDPEEIIDGKPLKDHLKFSVAFWHTFVNEGRDPFGDPTADRPWNRYTDPMDKAFARVDALFEFCEKLNIEYFCFHDRDIAPEGKTLRETNKILDKVVERIKERMKDSNVKLLWGTANLFSHPRYMHGAATTCSADVFAYAAAQVKKALEITKELGGEGYVFWGGREGYETLLNTDLGFELENLARFLRMAVDYAKRIGFTGQFLIEPKPKEPTKHQYDFDVATAYAFLKSHGLDEYFKFNIEANHATLAGHTFQHELRMARILGKLGSIDANQGDLLLGWDTDQFPTNVYDTTLAMYEVIKAGGFTKGGLNFDAKVRRASYKVEDLFIGHIAGMDTFALGFKVAYKLVKDGVLDKFIEEKYRSFREGIGRDIVEGKVDFEKLEEYIIDKETIELPSGKQEYLESLINSYIVKTILELR</sequence>
<gene>
    <name type="primary">xylA</name>
</gene>
<protein>
    <recommendedName>
        <fullName>Xylose isomerase</fullName>
        <ecNumber>5.3.1.5</ecNumber>
    </recommendedName>
</protein>
<organism>
    <name type="scientific">Thermotoga neapolitana</name>
    <dbReference type="NCBI Taxonomy" id="2337"/>
    <lineage>
        <taxon>Bacteria</taxon>
        <taxon>Thermotogati</taxon>
        <taxon>Thermotogota</taxon>
        <taxon>Thermotogae</taxon>
        <taxon>Thermotogales</taxon>
        <taxon>Thermotogaceae</taxon>
        <taxon>Thermotoga</taxon>
    </lineage>
</organism>
<proteinExistence type="evidence at protein level"/>
<dbReference type="EC" id="5.3.1.5"/>
<dbReference type="EMBL" id="L38994">
    <property type="protein sequence ID" value="AAB06798.1"/>
    <property type="molecule type" value="Genomic_DNA"/>
</dbReference>
<dbReference type="PDB" id="1A0E">
    <property type="method" value="X-ray"/>
    <property type="resolution" value="2.70 A"/>
    <property type="chains" value="A/D=2-444"/>
</dbReference>
<dbReference type="PDBsum" id="1A0E"/>
<dbReference type="SMR" id="P45687"/>
<dbReference type="OMA" id="IAYWHTF"/>
<dbReference type="BRENDA" id="5.3.1.5">
    <property type="organism ID" value="6332"/>
</dbReference>
<dbReference type="EvolutionaryTrace" id="P45687"/>
<dbReference type="GO" id="GO:0005737">
    <property type="term" value="C:cytoplasm"/>
    <property type="evidence" value="ECO:0007669"/>
    <property type="project" value="UniProtKB-SubCell"/>
</dbReference>
<dbReference type="GO" id="GO:0000287">
    <property type="term" value="F:magnesium ion binding"/>
    <property type="evidence" value="ECO:0007669"/>
    <property type="project" value="UniProtKB-UniRule"/>
</dbReference>
<dbReference type="GO" id="GO:0009045">
    <property type="term" value="F:xylose isomerase activity"/>
    <property type="evidence" value="ECO:0007669"/>
    <property type="project" value="UniProtKB-UniRule"/>
</dbReference>
<dbReference type="GO" id="GO:0042732">
    <property type="term" value="P:D-xylose metabolic process"/>
    <property type="evidence" value="ECO:0007669"/>
    <property type="project" value="UniProtKB-UniRule"/>
</dbReference>
<dbReference type="FunFam" id="3.20.20.150:FF:000002">
    <property type="entry name" value="Xylose isomerase"/>
    <property type="match status" value="1"/>
</dbReference>
<dbReference type="Gene3D" id="3.20.20.150">
    <property type="entry name" value="Divalent-metal-dependent TIM barrel enzymes"/>
    <property type="match status" value="1"/>
</dbReference>
<dbReference type="HAMAP" id="MF_00455">
    <property type="entry name" value="Xylose_isom_A"/>
    <property type="match status" value="1"/>
</dbReference>
<dbReference type="InterPro" id="IPR036237">
    <property type="entry name" value="Xyl_isomerase-like_sf"/>
</dbReference>
<dbReference type="InterPro" id="IPR013022">
    <property type="entry name" value="Xyl_isomerase-like_TIM-brl"/>
</dbReference>
<dbReference type="InterPro" id="IPR013452">
    <property type="entry name" value="Xylose_isom_bac"/>
</dbReference>
<dbReference type="InterPro" id="IPR001998">
    <property type="entry name" value="Xylose_isomerase"/>
</dbReference>
<dbReference type="NCBIfam" id="NF003998">
    <property type="entry name" value="PRK05474.1"/>
    <property type="match status" value="1"/>
</dbReference>
<dbReference type="NCBIfam" id="TIGR02630">
    <property type="entry name" value="xylose_isom_A"/>
    <property type="match status" value="1"/>
</dbReference>
<dbReference type="PANTHER" id="PTHR48408">
    <property type="match status" value="1"/>
</dbReference>
<dbReference type="PANTHER" id="PTHR48408:SF1">
    <property type="entry name" value="XYLOSE ISOMERASE"/>
    <property type="match status" value="1"/>
</dbReference>
<dbReference type="Pfam" id="PF01261">
    <property type="entry name" value="AP_endonuc_2"/>
    <property type="match status" value="1"/>
</dbReference>
<dbReference type="PRINTS" id="PR00688">
    <property type="entry name" value="XYLOSISMRASE"/>
</dbReference>
<dbReference type="SUPFAM" id="SSF51658">
    <property type="entry name" value="Xylose isomerase-like"/>
    <property type="match status" value="1"/>
</dbReference>
<dbReference type="PROSITE" id="PS51415">
    <property type="entry name" value="XYLOSE_ISOMERASE"/>
    <property type="match status" value="1"/>
</dbReference>
<feature type="chain" id="PRO_0000195814" description="Xylose isomerase">
    <location>
        <begin position="1"/>
        <end position="444"/>
    </location>
</feature>
<feature type="active site">
    <location>
        <position position="101"/>
    </location>
</feature>
<feature type="active site" evidence="1">
    <location>
        <position position="104"/>
    </location>
</feature>
<feature type="binding site">
    <location>
        <position position="232"/>
    </location>
    <ligand>
        <name>Co(2+)</name>
        <dbReference type="ChEBI" id="CHEBI:48828"/>
        <label>1</label>
    </ligand>
</feature>
<feature type="binding site">
    <location>
        <position position="268"/>
    </location>
    <ligand>
        <name>Co(2+)</name>
        <dbReference type="ChEBI" id="CHEBI:48828"/>
        <label>1</label>
    </ligand>
</feature>
<feature type="binding site">
    <location>
        <position position="268"/>
    </location>
    <ligand>
        <name>Co(2+)</name>
        <dbReference type="ChEBI" id="CHEBI:48828"/>
        <label>2</label>
    </ligand>
</feature>
<feature type="binding site">
    <location>
        <position position="271"/>
    </location>
    <ligand>
        <name>Co(2+)</name>
        <dbReference type="ChEBI" id="CHEBI:48828"/>
        <label>2</label>
    </ligand>
</feature>
<feature type="binding site">
    <location>
        <position position="296"/>
    </location>
    <ligand>
        <name>Co(2+)</name>
        <dbReference type="ChEBI" id="CHEBI:48828"/>
        <label>1</label>
    </ligand>
</feature>
<feature type="binding site">
    <location>
        <position position="307"/>
    </location>
    <ligand>
        <name>Co(2+)</name>
        <dbReference type="ChEBI" id="CHEBI:48828"/>
        <label>2</label>
    </ligand>
</feature>
<feature type="binding site">
    <location>
        <position position="309"/>
    </location>
    <ligand>
        <name>Co(2+)</name>
        <dbReference type="ChEBI" id="CHEBI:48828"/>
        <label>2</label>
    </ligand>
</feature>
<feature type="binding site">
    <location>
        <position position="339"/>
    </location>
    <ligand>
        <name>Co(2+)</name>
        <dbReference type="ChEBI" id="CHEBI:48828"/>
        <label>1</label>
    </ligand>
</feature>
<feature type="strand" evidence="3">
    <location>
        <begin position="23"/>
        <end position="26"/>
    </location>
</feature>
<feature type="helix" evidence="3">
    <location>
        <begin position="38"/>
        <end position="42"/>
    </location>
</feature>
<feature type="strand" evidence="3">
    <location>
        <begin position="45"/>
        <end position="47"/>
    </location>
</feature>
<feature type="helix" evidence="3">
    <location>
        <begin position="48"/>
        <end position="51"/>
    </location>
</feature>
<feature type="helix" evidence="3">
    <location>
        <begin position="68"/>
        <end position="70"/>
    </location>
</feature>
<feature type="helix" evidence="3">
    <location>
        <begin position="75"/>
        <end position="93"/>
    </location>
</feature>
<feature type="strand" evidence="3">
    <location>
        <begin position="97"/>
        <end position="101"/>
    </location>
</feature>
<feature type="helix" evidence="3">
    <location>
        <begin position="102"/>
        <end position="105"/>
    </location>
</feature>
<feature type="helix" evidence="3">
    <location>
        <begin position="112"/>
        <end position="132"/>
    </location>
</feature>
<feature type="strand" evidence="3">
    <location>
        <begin position="136"/>
        <end position="141"/>
    </location>
</feature>
<feature type="strand" evidence="3">
    <location>
        <begin position="145"/>
        <end position="147"/>
    </location>
</feature>
<feature type="helix" evidence="3">
    <location>
        <begin position="148"/>
        <end position="150"/>
    </location>
</feature>
<feature type="helix" evidence="3">
    <location>
        <begin position="160"/>
        <end position="179"/>
    </location>
</feature>
<feature type="strand" evidence="3">
    <location>
        <begin position="183"/>
        <end position="187"/>
    </location>
</feature>
<feature type="strand" evidence="3">
    <location>
        <begin position="192"/>
        <end position="195"/>
    </location>
</feature>
<feature type="helix" evidence="3">
    <location>
        <begin position="202"/>
        <end position="222"/>
    </location>
</feature>
<feature type="strand" evidence="3">
    <location>
        <begin position="227"/>
        <end position="231"/>
    </location>
</feature>
<feature type="strand" evidence="3">
    <location>
        <begin position="237"/>
        <end position="244"/>
    </location>
</feature>
<feature type="helix" evidence="3">
    <location>
        <begin position="247"/>
        <end position="256"/>
    </location>
</feature>
<feature type="helix" evidence="3">
    <location>
        <begin position="260"/>
        <end position="262"/>
    </location>
</feature>
<feature type="strand" evidence="3">
    <location>
        <begin position="263"/>
        <end position="268"/>
    </location>
</feature>
<feature type="helix" evidence="3">
    <location>
        <begin position="269"/>
        <end position="274"/>
    </location>
</feature>
<feature type="helix" evidence="3">
    <location>
        <begin position="279"/>
        <end position="288"/>
    </location>
</feature>
<feature type="strand" evidence="3">
    <location>
        <begin position="292"/>
        <end position="296"/>
    </location>
</feature>
<feature type="strand" evidence="3">
    <location>
        <begin position="304"/>
        <end position="306"/>
    </location>
</feature>
<feature type="helix" evidence="3">
    <location>
        <begin position="315"/>
        <end position="328"/>
    </location>
</feature>
<feature type="strand" evidence="3">
    <location>
        <begin position="336"/>
        <end position="338"/>
    </location>
</feature>
<feature type="helix" evidence="3">
    <location>
        <begin position="349"/>
        <end position="376"/>
    </location>
</feature>
<feature type="helix" evidence="3">
    <location>
        <begin position="378"/>
        <end position="386"/>
    </location>
</feature>
<feature type="helix" evidence="3">
    <location>
        <begin position="388"/>
        <end position="390"/>
    </location>
</feature>
<feature type="helix" evidence="3">
    <location>
        <begin position="393"/>
        <end position="400"/>
    </location>
</feature>
<feature type="helix" evidence="3">
    <location>
        <begin position="405"/>
        <end position="412"/>
    </location>
</feature>
<feature type="helix" evidence="3">
    <location>
        <begin position="425"/>
        <end position="441"/>
    </location>
</feature>